<comment type="function">
    <text evidence="1">Specifically methylates the N7 position of guanine in position 527 of 16S rRNA.</text>
</comment>
<comment type="catalytic activity">
    <reaction>
        <text>guanosine(527) in 16S rRNA + S-adenosyl-L-methionine = N(7)-methylguanosine(527) in 16S rRNA + S-adenosyl-L-homocysteine</text>
        <dbReference type="Rhea" id="RHEA:42732"/>
        <dbReference type="Rhea" id="RHEA-COMP:10209"/>
        <dbReference type="Rhea" id="RHEA-COMP:10210"/>
        <dbReference type="ChEBI" id="CHEBI:57856"/>
        <dbReference type="ChEBI" id="CHEBI:59789"/>
        <dbReference type="ChEBI" id="CHEBI:74269"/>
        <dbReference type="ChEBI" id="CHEBI:74480"/>
        <dbReference type="EC" id="2.1.1.170"/>
    </reaction>
</comment>
<comment type="subcellular location">
    <subcellularLocation>
        <location evidence="2">Cytoplasm</location>
    </subcellularLocation>
</comment>
<comment type="similarity">
    <text evidence="2">In the N-terminal section; belongs to the methyltransferase superfamily. RNA methyltransferase RsmG family.</text>
</comment>
<comment type="similarity">
    <text evidence="2">In the C-terminal section; belongs to the class IV-like SAM-binding methyltransferase superfamily. RNA methyltransferase TrmH family.</text>
</comment>
<name>RSMG2_SYNFM</name>
<keyword id="KW-0963">Cytoplasm</keyword>
<keyword id="KW-0489">Methyltransferase</keyword>
<keyword id="KW-1185">Reference proteome</keyword>
<keyword id="KW-0698">rRNA processing</keyword>
<keyword id="KW-0949">S-adenosyl-L-methionine</keyword>
<keyword id="KW-0808">Transferase</keyword>
<evidence type="ECO:0000250" key="1"/>
<evidence type="ECO:0000305" key="2"/>
<reference key="1">
    <citation type="submission" date="2006-10" db="EMBL/GenBank/DDBJ databases">
        <title>Complete sequence of Syntrophobacter fumaroxidans MPOB.</title>
        <authorList>
            <consortium name="US DOE Joint Genome Institute"/>
            <person name="Copeland A."/>
            <person name="Lucas S."/>
            <person name="Lapidus A."/>
            <person name="Barry K."/>
            <person name="Detter J.C."/>
            <person name="Glavina del Rio T."/>
            <person name="Hammon N."/>
            <person name="Israni S."/>
            <person name="Pitluck S."/>
            <person name="Goltsman E.G."/>
            <person name="Martinez M."/>
            <person name="Schmutz J."/>
            <person name="Larimer F."/>
            <person name="Land M."/>
            <person name="Hauser L."/>
            <person name="Kyrpides N."/>
            <person name="Kim E."/>
            <person name="Boone D.R."/>
            <person name="Brockman F."/>
            <person name="Culley D."/>
            <person name="Ferry J."/>
            <person name="Gunsalus R."/>
            <person name="McInerney M.J."/>
            <person name="Morrison M."/>
            <person name="Plugge C."/>
            <person name="Rohlin L."/>
            <person name="Scholten J."/>
            <person name="Sieber J."/>
            <person name="Stams A.J.M."/>
            <person name="Worm P."/>
            <person name="Henstra A.M."/>
            <person name="Richardson P."/>
        </authorList>
    </citation>
    <scope>NUCLEOTIDE SEQUENCE [LARGE SCALE GENOMIC DNA]</scope>
    <source>
        <strain>DSM 10017 / MPOB</strain>
    </source>
</reference>
<gene>
    <name type="primary">rsmG2</name>
    <name type="ordered locus">Sfum_1152</name>
</gene>
<accession>A0LHE3</accession>
<proteinExistence type="inferred from homology"/>
<sequence>MRNGTIRYPGSDAAPGPDEMSAILRRCGIRLAPARIGQLWTYHQLLREFNPELNLTRIHNFANMVLKLYVDSLLPMNLVELPSPLMDLGTGPGMPGIPIKIAMPELEIVLAESRQKRAAFLKMAVERLKLEKVEVVGKSVGSSFEVPVKGVITRAVESVGATLERIAGCLDRDGLAIFMKGPQCDAEIGEALKRFRGEYRLWRDIHYTIPHTRNERRLVVFQRLGPPTRIRKETAMKRHGFRKIESENNDLYRDIRKLLTSRGIRKQQRALVSGSKQVHETLRDFPDDCLAWIAPGQEMPPPEGAPGHMSWYQMAPALFETLDVFGTRTPLLLIKVGEIETWDPVEGFPAGCSVLVPFQDPENVGAVIRSAAAFGAVQVILLRESAHPFHPKALRASGGAVLRMKLRNGPPLENLPENLPILPLSAEGRDITRHVFPAAFGLLPGLEGPGLPDNWRRKSFAIPICKDVESLNAATAAAIALYAWSRSGSQTKHSPAPA</sequence>
<dbReference type="EC" id="2.1.1.170"/>
<dbReference type="EMBL" id="CP000478">
    <property type="protein sequence ID" value="ABK16845.1"/>
    <property type="molecule type" value="Genomic_DNA"/>
</dbReference>
<dbReference type="RefSeq" id="WP_011698016.1">
    <property type="nucleotide sequence ID" value="NC_008554.1"/>
</dbReference>
<dbReference type="SMR" id="A0LHE3"/>
<dbReference type="STRING" id="335543.Sfum_1152"/>
<dbReference type="KEGG" id="sfu:Sfum_1152"/>
<dbReference type="eggNOG" id="COG0357">
    <property type="taxonomic scope" value="Bacteria"/>
</dbReference>
<dbReference type="eggNOG" id="COG0566">
    <property type="taxonomic scope" value="Bacteria"/>
</dbReference>
<dbReference type="HOGENOM" id="CLU_547381_0_0_7"/>
<dbReference type="InParanoid" id="A0LHE3"/>
<dbReference type="OrthoDB" id="9808773at2"/>
<dbReference type="Proteomes" id="UP000001784">
    <property type="component" value="Chromosome"/>
</dbReference>
<dbReference type="GO" id="GO:0005829">
    <property type="term" value="C:cytosol"/>
    <property type="evidence" value="ECO:0007669"/>
    <property type="project" value="TreeGrafter"/>
</dbReference>
<dbReference type="GO" id="GO:0003723">
    <property type="term" value="F:RNA binding"/>
    <property type="evidence" value="ECO:0007669"/>
    <property type="project" value="InterPro"/>
</dbReference>
<dbReference type="GO" id="GO:0070043">
    <property type="term" value="F:rRNA (guanine-N7-)-methyltransferase activity"/>
    <property type="evidence" value="ECO:0007669"/>
    <property type="project" value="UniProtKB-UniRule"/>
</dbReference>
<dbReference type="CDD" id="cd18095">
    <property type="entry name" value="SpoU-like_rRNA-MTase"/>
    <property type="match status" value="1"/>
</dbReference>
<dbReference type="Gene3D" id="3.40.1280.10">
    <property type="match status" value="1"/>
</dbReference>
<dbReference type="Gene3D" id="3.40.50.150">
    <property type="entry name" value="Vaccinia Virus protein VP39"/>
    <property type="match status" value="1"/>
</dbReference>
<dbReference type="HAMAP" id="MF_00074">
    <property type="entry name" value="16SrRNA_methyltr_G"/>
    <property type="match status" value="1"/>
</dbReference>
<dbReference type="InterPro" id="IPR029028">
    <property type="entry name" value="Alpha/beta_knot_MTases"/>
</dbReference>
<dbReference type="InterPro" id="IPR003682">
    <property type="entry name" value="rRNA_ssu_MeTfrase_G"/>
</dbReference>
<dbReference type="InterPro" id="IPR029063">
    <property type="entry name" value="SAM-dependent_MTases_sf"/>
</dbReference>
<dbReference type="InterPro" id="IPR001537">
    <property type="entry name" value="SpoU_MeTrfase"/>
</dbReference>
<dbReference type="InterPro" id="IPR029026">
    <property type="entry name" value="tRNA_m1G_MTases_N"/>
</dbReference>
<dbReference type="NCBIfam" id="TIGR00138">
    <property type="entry name" value="rsmG_gidB"/>
    <property type="match status" value="1"/>
</dbReference>
<dbReference type="PANTHER" id="PTHR31760">
    <property type="entry name" value="S-ADENOSYL-L-METHIONINE-DEPENDENT METHYLTRANSFERASES SUPERFAMILY PROTEIN"/>
    <property type="match status" value="1"/>
</dbReference>
<dbReference type="PANTHER" id="PTHR31760:SF0">
    <property type="entry name" value="S-ADENOSYL-L-METHIONINE-DEPENDENT METHYLTRANSFERASES SUPERFAMILY PROTEIN"/>
    <property type="match status" value="1"/>
</dbReference>
<dbReference type="Pfam" id="PF02527">
    <property type="entry name" value="GidB"/>
    <property type="match status" value="1"/>
</dbReference>
<dbReference type="Pfam" id="PF00588">
    <property type="entry name" value="SpoU_methylase"/>
    <property type="match status" value="1"/>
</dbReference>
<dbReference type="SUPFAM" id="SSF75217">
    <property type="entry name" value="alpha/beta knot"/>
    <property type="match status" value="1"/>
</dbReference>
<dbReference type="SUPFAM" id="SSF53335">
    <property type="entry name" value="S-adenosyl-L-methionine-dependent methyltransferases"/>
    <property type="match status" value="1"/>
</dbReference>
<organism>
    <name type="scientific">Syntrophobacter fumaroxidans (strain DSM 10017 / MPOB)</name>
    <dbReference type="NCBI Taxonomy" id="335543"/>
    <lineage>
        <taxon>Bacteria</taxon>
        <taxon>Pseudomonadati</taxon>
        <taxon>Thermodesulfobacteriota</taxon>
        <taxon>Syntrophobacteria</taxon>
        <taxon>Syntrophobacterales</taxon>
        <taxon>Syntrophobacteraceae</taxon>
        <taxon>Syntrophobacter</taxon>
    </lineage>
</organism>
<feature type="chain" id="PRO_0000342942" description="Ribosomal RNA small subunit methyltransferase G 2">
    <location>
        <begin position="1"/>
        <end position="498"/>
    </location>
</feature>
<feature type="region of interest" description="Methyltransferase G">
    <location>
        <begin position="1"/>
        <end position="230"/>
    </location>
</feature>
<feature type="region of interest" description="Methyltransferase TrmH family">
    <location>
        <begin position="231"/>
        <end position="498"/>
    </location>
</feature>
<feature type="binding site" evidence="1">
    <location>
        <position position="89"/>
    </location>
    <ligand>
        <name>S-adenosyl-L-methionine</name>
        <dbReference type="ChEBI" id="CHEBI:59789"/>
    </ligand>
</feature>
<feature type="binding site" evidence="1">
    <location>
        <position position="94"/>
    </location>
    <ligand>
        <name>S-adenosyl-L-methionine</name>
        <dbReference type="ChEBI" id="CHEBI:59789"/>
    </ligand>
</feature>
<feature type="binding site" evidence="1">
    <location>
        <position position="154"/>
    </location>
    <ligand>
        <name>S-adenosyl-L-methionine</name>
        <dbReference type="ChEBI" id="CHEBI:59789"/>
    </ligand>
</feature>
<protein>
    <recommendedName>
        <fullName>Ribosomal RNA small subunit methyltransferase G 2</fullName>
        <ecNumber>2.1.1.170</ecNumber>
    </recommendedName>
    <alternativeName>
        <fullName>16S rRNA 7-methylguanosine methyltransferase 2</fullName>
        <shortName>16S rRNA m7G methyltransferase 2</shortName>
    </alternativeName>
</protein>